<reference key="1">
    <citation type="submission" date="2007-10" db="EMBL/GenBank/DDBJ databases">
        <title>Complete sequence of Shewanella pealeana ATCC 700345.</title>
        <authorList>
            <consortium name="US DOE Joint Genome Institute"/>
            <person name="Copeland A."/>
            <person name="Lucas S."/>
            <person name="Lapidus A."/>
            <person name="Barry K."/>
            <person name="Glavina del Rio T."/>
            <person name="Dalin E."/>
            <person name="Tice H."/>
            <person name="Pitluck S."/>
            <person name="Chertkov O."/>
            <person name="Brettin T."/>
            <person name="Bruce D."/>
            <person name="Detter J.C."/>
            <person name="Han C."/>
            <person name="Schmutz J."/>
            <person name="Larimer F."/>
            <person name="Land M."/>
            <person name="Hauser L."/>
            <person name="Kyrpides N."/>
            <person name="Kim E."/>
            <person name="Zhao J.-S.Z."/>
            <person name="Manno D."/>
            <person name="Hawari J."/>
            <person name="Richardson P."/>
        </authorList>
    </citation>
    <scope>NUCLEOTIDE SEQUENCE [LARGE SCALE GENOMIC DNA]</scope>
    <source>
        <strain>ATCC 700345 / ANG-SQ1</strain>
    </source>
</reference>
<feature type="chain" id="PRO_1000074755" description="UDP-N-acetylmuramate--L-alanine ligase">
    <location>
        <begin position="1"/>
        <end position="489"/>
    </location>
</feature>
<feature type="binding site" evidence="1">
    <location>
        <begin position="128"/>
        <end position="134"/>
    </location>
    <ligand>
        <name>ATP</name>
        <dbReference type="ChEBI" id="CHEBI:30616"/>
    </ligand>
</feature>
<protein>
    <recommendedName>
        <fullName evidence="1">UDP-N-acetylmuramate--L-alanine ligase</fullName>
        <ecNumber evidence="1">6.3.2.8</ecNumber>
    </recommendedName>
    <alternativeName>
        <fullName evidence="1">UDP-N-acetylmuramoyl-L-alanine synthetase</fullName>
    </alternativeName>
</protein>
<organism>
    <name type="scientific">Shewanella pealeana (strain ATCC 700345 / ANG-SQ1)</name>
    <dbReference type="NCBI Taxonomy" id="398579"/>
    <lineage>
        <taxon>Bacteria</taxon>
        <taxon>Pseudomonadati</taxon>
        <taxon>Pseudomonadota</taxon>
        <taxon>Gammaproteobacteria</taxon>
        <taxon>Alteromonadales</taxon>
        <taxon>Shewanellaceae</taxon>
        <taxon>Shewanella</taxon>
    </lineage>
</organism>
<evidence type="ECO:0000255" key="1">
    <source>
        <dbReference type="HAMAP-Rule" id="MF_00046"/>
    </source>
</evidence>
<keyword id="KW-0067">ATP-binding</keyword>
<keyword id="KW-0131">Cell cycle</keyword>
<keyword id="KW-0132">Cell division</keyword>
<keyword id="KW-0133">Cell shape</keyword>
<keyword id="KW-0961">Cell wall biogenesis/degradation</keyword>
<keyword id="KW-0963">Cytoplasm</keyword>
<keyword id="KW-0436">Ligase</keyword>
<keyword id="KW-0547">Nucleotide-binding</keyword>
<keyword id="KW-0573">Peptidoglycan synthesis</keyword>
<keyword id="KW-1185">Reference proteome</keyword>
<name>MURC_SHEPA</name>
<sequence>MSNKAEKYSQLRTMIPEMRRVKHIYFVGIGGAGMGGIAEVLVNEGYKLSGSDIAQSAVTERLAQLGVTIYIGHDASQVKDVDVVVVSTAISADNPELVAAKELRIPVVRRAEMLAELMRYRHGVAVAGTHGKTTTTSLIASVYGQAERDPTFVIGGLLNSAGTNARLGHSRYLIAEADESDASFLHLQPMVSVVTNIEADHMDTYEGDLEKLKTTFVDFLHNLPFYGVAVVCIDDPIVRELIPRIGRRIVTYGFSEDADVRALDFKQTGYSCEFTVRRAGMDDLQLSVNLPGEHNVLNSLAAIAVATEDEIEDEAIITALADFQGIGRRFQQIGEFTTAKGEIKLVDDYGHHPSEVAATIKAARLGWPERRLVMIYQPHRYSRTRDLYEDFVEVLSQVDCLLMLDVYAAGEAPIPGADSRALCRSIRVRGQVEPVFVASTEQLETVLPEILQDGDLLLTQGAGSIGLLSRSLAESNLGFDSAVTDEKNA</sequence>
<accession>A8H983</accession>
<comment type="function">
    <text evidence="1">Cell wall formation.</text>
</comment>
<comment type="catalytic activity">
    <reaction evidence="1">
        <text>UDP-N-acetyl-alpha-D-muramate + L-alanine + ATP = UDP-N-acetyl-alpha-D-muramoyl-L-alanine + ADP + phosphate + H(+)</text>
        <dbReference type="Rhea" id="RHEA:23372"/>
        <dbReference type="ChEBI" id="CHEBI:15378"/>
        <dbReference type="ChEBI" id="CHEBI:30616"/>
        <dbReference type="ChEBI" id="CHEBI:43474"/>
        <dbReference type="ChEBI" id="CHEBI:57972"/>
        <dbReference type="ChEBI" id="CHEBI:70757"/>
        <dbReference type="ChEBI" id="CHEBI:83898"/>
        <dbReference type="ChEBI" id="CHEBI:456216"/>
        <dbReference type="EC" id="6.3.2.8"/>
    </reaction>
</comment>
<comment type="pathway">
    <text evidence="1">Cell wall biogenesis; peptidoglycan biosynthesis.</text>
</comment>
<comment type="subcellular location">
    <subcellularLocation>
        <location evidence="1">Cytoplasm</location>
    </subcellularLocation>
</comment>
<comment type="similarity">
    <text evidence="1">Belongs to the MurCDEF family.</text>
</comment>
<proteinExistence type="inferred from homology"/>
<gene>
    <name evidence="1" type="primary">murC</name>
    <name type="ordered locus">Spea_3810</name>
</gene>
<dbReference type="EC" id="6.3.2.8" evidence="1"/>
<dbReference type="EMBL" id="CP000851">
    <property type="protein sequence ID" value="ABV89120.1"/>
    <property type="molecule type" value="Genomic_DNA"/>
</dbReference>
<dbReference type="RefSeq" id="WP_012157002.1">
    <property type="nucleotide sequence ID" value="NC_009901.1"/>
</dbReference>
<dbReference type="SMR" id="A8H983"/>
<dbReference type="STRING" id="398579.Spea_3810"/>
<dbReference type="KEGG" id="spl:Spea_3810"/>
<dbReference type="eggNOG" id="COG0773">
    <property type="taxonomic scope" value="Bacteria"/>
</dbReference>
<dbReference type="HOGENOM" id="CLU_028104_2_2_6"/>
<dbReference type="OrthoDB" id="9804126at2"/>
<dbReference type="UniPathway" id="UPA00219"/>
<dbReference type="Proteomes" id="UP000002608">
    <property type="component" value="Chromosome"/>
</dbReference>
<dbReference type="GO" id="GO:0005737">
    <property type="term" value="C:cytoplasm"/>
    <property type="evidence" value="ECO:0007669"/>
    <property type="project" value="UniProtKB-SubCell"/>
</dbReference>
<dbReference type="GO" id="GO:0005524">
    <property type="term" value="F:ATP binding"/>
    <property type="evidence" value="ECO:0007669"/>
    <property type="project" value="UniProtKB-UniRule"/>
</dbReference>
<dbReference type="GO" id="GO:0008763">
    <property type="term" value="F:UDP-N-acetylmuramate-L-alanine ligase activity"/>
    <property type="evidence" value="ECO:0007669"/>
    <property type="project" value="UniProtKB-UniRule"/>
</dbReference>
<dbReference type="GO" id="GO:0051301">
    <property type="term" value="P:cell division"/>
    <property type="evidence" value="ECO:0007669"/>
    <property type="project" value="UniProtKB-KW"/>
</dbReference>
<dbReference type="GO" id="GO:0071555">
    <property type="term" value="P:cell wall organization"/>
    <property type="evidence" value="ECO:0007669"/>
    <property type="project" value="UniProtKB-KW"/>
</dbReference>
<dbReference type="GO" id="GO:0009252">
    <property type="term" value="P:peptidoglycan biosynthetic process"/>
    <property type="evidence" value="ECO:0007669"/>
    <property type="project" value="UniProtKB-UniRule"/>
</dbReference>
<dbReference type="GO" id="GO:0008360">
    <property type="term" value="P:regulation of cell shape"/>
    <property type="evidence" value="ECO:0007669"/>
    <property type="project" value="UniProtKB-KW"/>
</dbReference>
<dbReference type="FunFam" id="3.40.1190.10:FF:000001">
    <property type="entry name" value="UDP-N-acetylmuramate--L-alanine ligase"/>
    <property type="match status" value="1"/>
</dbReference>
<dbReference type="FunFam" id="3.40.50.720:FF:000046">
    <property type="entry name" value="UDP-N-acetylmuramate--L-alanine ligase"/>
    <property type="match status" value="1"/>
</dbReference>
<dbReference type="Gene3D" id="3.90.190.20">
    <property type="entry name" value="Mur ligase, C-terminal domain"/>
    <property type="match status" value="1"/>
</dbReference>
<dbReference type="Gene3D" id="3.40.1190.10">
    <property type="entry name" value="Mur-like, catalytic domain"/>
    <property type="match status" value="1"/>
</dbReference>
<dbReference type="Gene3D" id="3.40.50.720">
    <property type="entry name" value="NAD(P)-binding Rossmann-like Domain"/>
    <property type="match status" value="1"/>
</dbReference>
<dbReference type="HAMAP" id="MF_00046">
    <property type="entry name" value="MurC"/>
    <property type="match status" value="1"/>
</dbReference>
<dbReference type="InterPro" id="IPR036565">
    <property type="entry name" value="Mur-like_cat_sf"/>
</dbReference>
<dbReference type="InterPro" id="IPR004101">
    <property type="entry name" value="Mur_ligase_C"/>
</dbReference>
<dbReference type="InterPro" id="IPR036615">
    <property type="entry name" value="Mur_ligase_C_dom_sf"/>
</dbReference>
<dbReference type="InterPro" id="IPR013221">
    <property type="entry name" value="Mur_ligase_cen"/>
</dbReference>
<dbReference type="InterPro" id="IPR000713">
    <property type="entry name" value="Mur_ligase_N"/>
</dbReference>
<dbReference type="InterPro" id="IPR050061">
    <property type="entry name" value="MurCDEF_pg_biosynth"/>
</dbReference>
<dbReference type="InterPro" id="IPR005758">
    <property type="entry name" value="UDP-N-AcMur_Ala_ligase_MurC"/>
</dbReference>
<dbReference type="NCBIfam" id="TIGR01082">
    <property type="entry name" value="murC"/>
    <property type="match status" value="1"/>
</dbReference>
<dbReference type="PANTHER" id="PTHR43445:SF3">
    <property type="entry name" value="UDP-N-ACETYLMURAMATE--L-ALANINE LIGASE"/>
    <property type="match status" value="1"/>
</dbReference>
<dbReference type="PANTHER" id="PTHR43445">
    <property type="entry name" value="UDP-N-ACETYLMURAMATE--L-ALANINE LIGASE-RELATED"/>
    <property type="match status" value="1"/>
</dbReference>
<dbReference type="Pfam" id="PF01225">
    <property type="entry name" value="Mur_ligase"/>
    <property type="match status" value="1"/>
</dbReference>
<dbReference type="Pfam" id="PF02875">
    <property type="entry name" value="Mur_ligase_C"/>
    <property type="match status" value="1"/>
</dbReference>
<dbReference type="Pfam" id="PF08245">
    <property type="entry name" value="Mur_ligase_M"/>
    <property type="match status" value="1"/>
</dbReference>
<dbReference type="SUPFAM" id="SSF51984">
    <property type="entry name" value="MurCD N-terminal domain"/>
    <property type="match status" value="1"/>
</dbReference>
<dbReference type="SUPFAM" id="SSF53623">
    <property type="entry name" value="MurD-like peptide ligases, catalytic domain"/>
    <property type="match status" value="1"/>
</dbReference>
<dbReference type="SUPFAM" id="SSF53244">
    <property type="entry name" value="MurD-like peptide ligases, peptide-binding domain"/>
    <property type="match status" value="1"/>
</dbReference>